<evidence type="ECO:0000255" key="1">
    <source>
        <dbReference type="HAMAP-Rule" id="MF_00599"/>
    </source>
</evidence>
<sequence>MGKLTLLLLALLVWLQYSLWFGKNGIHDYSRVADDVAVQQATNAKLKARNDQLFAEIDDLNGGQEAIEERARNELSMTKPGETFYRLVPDATKRAGGPAQNNR</sequence>
<dbReference type="EMBL" id="CP000783">
    <property type="protein sequence ID" value="ABU75834.1"/>
    <property type="molecule type" value="Genomic_DNA"/>
</dbReference>
<dbReference type="RefSeq" id="WP_004387922.1">
    <property type="nucleotide sequence ID" value="NC_009778.1"/>
</dbReference>
<dbReference type="SMR" id="A7MJ56"/>
<dbReference type="GeneID" id="56729443"/>
<dbReference type="KEGG" id="esa:ESA_00543"/>
<dbReference type="HOGENOM" id="CLU_134863_5_2_6"/>
<dbReference type="Proteomes" id="UP000000260">
    <property type="component" value="Chromosome"/>
</dbReference>
<dbReference type="GO" id="GO:0032153">
    <property type="term" value="C:cell division site"/>
    <property type="evidence" value="ECO:0007669"/>
    <property type="project" value="UniProtKB-UniRule"/>
</dbReference>
<dbReference type="GO" id="GO:0030428">
    <property type="term" value="C:cell septum"/>
    <property type="evidence" value="ECO:0007669"/>
    <property type="project" value="TreeGrafter"/>
</dbReference>
<dbReference type="GO" id="GO:0005886">
    <property type="term" value="C:plasma membrane"/>
    <property type="evidence" value="ECO:0007669"/>
    <property type="project" value="UniProtKB-SubCell"/>
</dbReference>
<dbReference type="GO" id="GO:0043093">
    <property type="term" value="P:FtsZ-dependent cytokinesis"/>
    <property type="evidence" value="ECO:0007669"/>
    <property type="project" value="UniProtKB-UniRule"/>
</dbReference>
<dbReference type="FunFam" id="1.20.5.400:FF:000001">
    <property type="entry name" value="Cell division protein FtsB"/>
    <property type="match status" value="1"/>
</dbReference>
<dbReference type="Gene3D" id="1.20.5.400">
    <property type="match status" value="1"/>
</dbReference>
<dbReference type="HAMAP" id="MF_00599">
    <property type="entry name" value="FtsB"/>
    <property type="match status" value="1"/>
</dbReference>
<dbReference type="InterPro" id="IPR023081">
    <property type="entry name" value="Cell_div_FtsB"/>
</dbReference>
<dbReference type="InterPro" id="IPR007060">
    <property type="entry name" value="FtsL/DivIC"/>
</dbReference>
<dbReference type="NCBIfam" id="NF002058">
    <property type="entry name" value="PRK00888.1"/>
    <property type="match status" value="1"/>
</dbReference>
<dbReference type="PANTHER" id="PTHR37485">
    <property type="entry name" value="CELL DIVISION PROTEIN FTSB"/>
    <property type="match status" value="1"/>
</dbReference>
<dbReference type="PANTHER" id="PTHR37485:SF1">
    <property type="entry name" value="CELL DIVISION PROTEIN FTSB"/>
    <property type="match status" value="1"/>
</dbReference>
<dbReference type="Pfam" id="PF04977">
    <property type="entry name" value="DivIC"/>
    <property type="match status" value="1"/>
</dbReference>
<name>FTSB_CROS8</name>
<accession>A7MJ56</accession>
<proteinExistence type="inferred from homology"/>
<organism>
    <name type="scientific">Cronobacter sakazakii (strain ATCC BAA-894)</name>
    <name type="common">Enterobacter sakazakii</name>
    <dbReference type="NCBI Taxonomy" id="290339"/>
    <lineage>
        <taxon>Bacteria</taxon>
        <taxon>Pseudomonadati</taxon>
        <taxon>Pseudomonadota</taxon>
        <taxon>Gammaproteobacteria</taxon>
        <taxon>Enterobacterales</taxon>
        <taxon>Enterobacteriaceae</taxon>
        <taxon>Cronobacter</taxon>
    </lineage>
</organism>
<reference key="1">
    <citation type="journal article" date="2010" name="PLoS ONE">
        <title>Genome sequence of Cronobacter sakazakii BAA-894 and comparative genomic hybridization analysis with other Cronobacter species.</title>
        <authorList>
            <person name="Kucerova E."/>
            <person name="Clifton S.W."/>
            <person name="Xia X.Q."/>
            <person name="Long F."/>
            <person name="Porwollik S."/>
            <person name="Fulton L."/>
            <person name="Fronick C."/>
            <person name="Minx P."/>
            <person name="Kyung K."/>
            <person name="Warren W."/>
            <person name="Fulton R."/>
            <person name="Feng D."/>
            <person name="Wollam A."/>
            <person name="Shah N."/>
            <person name="Bhonagiri V."/>
            <person name="Nash W.E."/>
            <person name="Hallsworth-Pepin K."/>
            <person name="Wilson R.K."/>
            <person name="McClelland M."/>
            <person name="Forsythe S.J."/>
        </authorList>
    </citation>
    <scope>NUCLEOTIDE SEQUENCE [LARGE SCALE GENOMIC DNA]</scope>
    <source>
        <strain>ATCC BAA-894</strain>
    </source>
</reference>
<keyword id="KW-0131">Cell cycle</keyword>
<keyword id="KW-0132">Cell division</keyword>
<keyword id="KW-0997">Cell inner membrane</keyword>
<keyword id="KW-1003">Cell membrane</keyword>
<keyword id="KW-0175">Coiled coil</keyword>
<keyword id="KW-0472">Membrane</keyword>
<keyword id="KW-1185">Reference proteome</keyword>
<keyword id="KW-0812">Transmembrane</keyword>
<keyword id="KW-1133">Transmembrane helix</keyword>
<comment type="function">
    <text evidence="1">Essential cell division protein. May link together the upstream cell division proteins, which are predominantly cytoplasmic, with the downstream cell division proteins, which are predominantly periplasmic.</text>
</comment>
<comment type="subunit">
    <text evidence="1">Part of a complex composed of FtsB, FtsL and FtsQ.</text>
</comment>
<comment type="subcellular location">
    <subcellularLocation>
        <location evidence="1">Cell inner membrane</location>
        <topology evidence="1">Single-pass type II membrane protein</topology>
    </subcellularLocation>
    <text evidence="1">Localizes to the division septum.</text>
</comment>
<comment type="similarity">
    <text evidence="1">Belongs to the FtsB family.</text>
</comment>
<feature type="chain" id="PRO_1000025699" description="Cell division protein FtsB">
    <location>
        <begin position="1"/>
        <end position="103"/>
    </location>
</feature>
<feature type="topological domain" description="Cytoplasmic" evidence="1">
    <location>
        <begin position="1"/>
        <end position="3"/>
    </location>
</feature>
<feature type="transmembrane region" description="Helical" evidence="1">
    <location>
        <begin position="4"/>
        <end position="21"/>
    </location>
</feature>
<feature type="topological domain" description="Periplasmic" evidence="1">
    <location>
        <begin position="22"/>
        <end position="103"/>
    </location>
</feature>
<feature type="coiled-coil region" evidence="1">
    <location>
        <begin position="38"/>
        <end position="62"/>
    </location>
</feature>
<gene>
    <name evidence="1" type="primary">ftsB</name>
    <name type="ordered locus">ESA_00543</name>
</gene>
<protein>
    <recommendedName>
        <fullName evidence="1">Cell division protein FtsB</fullName>
    </recommendedName>
</protein>